<organism>
    <name type="scientific">Clostridium novyi (strain NT)</name>
    <dbReference type="NCBI Taxonomy" id="386415"/>
    <lineage>
        <taxon>Bacteria</taxon>
        <taxon>Bacillati</taxon>
        <taxon>Bacillota</taxon>
        <taxon>Clostridia</taxon>
        <taxon>Eubacteriales</taxon>
        <taxon>Clostridiaceae</taxon>
        <taxon>Clostridium</taxon>
    </lineage>
</organism>
<reference key="1">
    <citation type="journal article" date="2006" name="Nat. Biotechnol.">
        <title>The genome and transcriptomes of the anti-tumor agent Clostridium novyi-NT.</title>
        <authorList>
            <person name="Bettegowda C."/>
            <person name="Huang X."/>
            <person name="Lin J."/>
            <person name="Cheong I."/>
            <person name="Kohli M."/>
            <person name="Szabo S.A."/>
            <person name="Zhang X."/>
            <person name="Diaz L.A. Jr."/>
            <person name="Velculescu V.E."/>
            <person name="Parmigiani G."/>
            <person name="Kinzler K.W."/>
            <person name="Vogelstein B."/>
            <person name="Zhou S."/>
        </authorList>
    </citation>
    <scope>NUCLEOTIDE SEQUENCE [LARGE SCALE GENOMIC DNA]</scope>
    <source>
        <strain>NT</strain>
    </source>
</reference>
<proteinExistence type="inferred from homology"/>
<name>MUTS_CLONN</name>
<evidence type="ECO:0000255" key="1">
    <source>
        <dbReference type="HAMAP-Rule" id="MF_00096"/>
    </source>
</evidence>
<evidence type="ECO:0000256" key="2">
    <source>
        <dbReference type="SAM" id="MobiDB-lite"/>
    </source>
</evidence>
<protein>
    <recommendedName>
        <fullName evidence="1">DNA mismatch repair protein MutS</fullName>
    </recommendedName>
</protein>
<feature type="chain" id="PRO_1000008053" description="DNA mismatch repair protein MutS">
    <location>
        <begin position="1"/>
        <end position="909"/>
    </location>
</feature>
<feature type="region of interest" description="Disordered" evidence="2">
    <location>
        <begin position="798"/>
        <end position="827"/>
    </location>
</feature>
<feature type="compositionally biased region" description="Basic and acidic residues" evidence="2">
    <location>
        <begin position="818"/>
        <end position="827"/>
    </location>
</feature>
<feature type="binding site" evidence="1">
    <location>
        <begin position="614"/>
        <end position="621"/>
    </location>
    <ligand>
        <name>ATP</name>
        <dbReference type="ChEBI" id="CHEBI:30616"/>
    </ligand>
</feature>
<gene>
    <name evidence="1" type="primary">mutS</name>
    <name type="ordered locus">NT01CX_2105</name>
</gene>
<comment type="function">
    <text evidence="1">This protein is involved in the repair of mismatches in DNA. It is possible that it carries out the mismatch recognition step. This protein has a weak ATPase activity.</text>
</comment>
<comment type="similarity">
    <text evidence="1">Belongs to the DNA mismatch repair MutS family.</text>
</comment>
<sequence length="909" mass="103344">MALTPMMKQYLEVKERNKDCILFFRLGDFYEMFFEDAETAARELELVLTGRDCGLENRAPMCGIPYHAANTYISRLITKGYKVAICEQLEDPSKAKGIVKRDVIKIYTPGTYSDASFLEETKNNYLMSLYLENELVCMAFADVSTGDFQCTYVKYNESSILDEISKFMPKEIVIIDSIDDTIIKAIKERFEVSFTVKNKDFFYLNASLNLKNQFPDFKEENYDDIVITGCNGLLNYIIETQKTTLIHINKLDYYETVDYLSIDINSRRNLELTETLRDKSKKGSLLWVLDKTTTAMGARLLRKWVEQPLIHKEIIENRQNAVEEILNNVPLLDDLRNNLKDVYDIERLAGKISSKTVNAKELLSLKNSIGNLPIIKKIIENYNTDLLKNIYSSLDCLEDLYSLLDNSILPSPALSIKEGGIIKDGYNKTIDELRMAKSHGTEWIASLEEQERNITGIKSLKVKYNKVFGYYIEITKSNLNQVPENRYIRKQTLANCERFITPELKEVEDKILGAQEKLMELEYNVFVEIRELIEKEIYRIKNTAKLISSIDVLQSLAIVALESNYSKPIIKLDGELLIKDGRHPVVEKMIPRDSFVSNDTILDNKDHQLLLITGPNMAGKSTYMRQVALITLMAQIGSFVPAKEAEIVICDKIFTRIGASDDLARGKSTFMVEMWEVANILNNATNKSLILLDEVGRGTSTYDGLSIAWAVIEYICKDNNLKSKTLFATHYHELTSLEGKIKGVKNYSIAVKKVDDDIIFLRKIIEGGADESYGIEVAKLAGIPSVVTNRAKEILNTLEENSPQNNDISKESSSSSNSHDKLESSVIKESESNIKTYDEISNLETNKIKEAQVEVAVEKEVTQDIKQIGFLDIEKEALIKEISSIDILNMTVKDCFDKLYDIINKAKSL</sequence>
<dbReference type="EMBL" id="CP000382">
    <property type="protein sequence ID" value="ABK60996.1"/>
    <property type="molecule type" value="Genomic_DNA"/>
</dbReference>
<dbReference type="RefSeq" id="WP_011722178.1">
    <property type="nucleotide sequence ID" value="NC_008593.1"/>
</dbReference>
<dbReference type="SMR" id="A0Q0M6"/>
<dbReference type="STRING" id="386415.NT01CX_2105"/>
<dbReference type="KEGG" id="cno:NT01CX_2105"/>
<dbReference type="PATRIC" id="fig|386415.7.peg.1210"/>
<dbReference type="eggNOG" id="COG0249">
    <property type="taxonomic scope" value="Bacteria"/>
</dbReference>
<dbReference type="HOGENOM" id="CLU_002472_4_0_9"/>
<dbReference type="Proteomes" id="UP000008220">
    <property type="component" value="Chromosome"/>
</dbReference>
<dbReference type="GO" id="GO:0005829">
    <property type="term" value="C:cytosol"/>
    <property type="evidence" value="ECO:0007669"/>
    <property type="project" value="TreeGrafter"/>
</dbReference>
<dbReference type="GO" id="GO:0005524">
    <property type="term" value="F:ATP binding"/>
    <property type="evidence" value="ECO:0007669"/>
    <property type="project" value="UniProtKB-UniRule"/>
</dbReference>
<dbReference type="GO" id="GO:0140664">
    <property type="term" value="F:ATP-dependent DNA damage sensor activity"/>
    <property type="evidence" value="ECO:0007669"/>
    <property type="project" value="InterPro"/>
</dbReference>
<dbReference type="GO" id="GO:0003684">
    <property type="term" value="F:damaged DNA binding"/>
    <property type="evidence" value="ECO:0007669"/>
    <property type="project" value="UniProtKB-UniRule"/>
</dbReference>
<dbReference type="GO" id="GO:0030983">
    <property type="term" value="F:mismatched DNA binding"/>
    <property type="evidence" value="ECO:0007669"/>
    <property type="project" value="InterPro"/>
</dbReference>
<dbReference type="GO" id="GO:0006298">
    <property type="term" value="P:mismatch repair"/>
    <property type="evidence" value="ECO:0007669"/>
    <property type="project" value="UniProtKB-UniRule"/>
</dbReference>
<dbReference type="CDD" id="cd03284">
    <property type="entry name" value="ABC_MutS1"/>
    <property type="match status" value="1"/>
</dbReference>
<dbReference type="FunFam" id="1.10.1420.10:FF:000007">
    <property type="entry name" value="DNA mismatch repair protein MutS"/>
    <property type="match status" value="1"/>
</dbReference>
<dbReference type="FunFam" id="3.40.1170.10:FF:000001">
    <property type="entry name" value="DNA mismatch repair protein MutS"/>
    <property type="match status" value="1"/>
</dbReference>
<dbReference type="FunFam" id="3.40.50.300:FF:001579">
    <property type="entry name" value="DNA mismatch repair protein MutS"/>
    <property type="match status" value="1"/>
</dbReference>
<dbReference type="Gene3D" id="1.10.1420.10">
    <property type="match status" value="2"/>
</dbReference>
<dbReference type="Gene3D" id="3.40.1170.10">
    <property type="entry name" value="DNA repair protein MutS, domain I"/>
    <property type="match status" value="1"/>
</dbReference>
<dbReference type="Gene3D" id="3.30.420.110">
    <property type="entry name" value="MutS, connector domain"/>
    <property type="match status" value="1"/>
</dbReference>
<dbReference type="Gene3D" id="3.40.50.300">
    <property type="entry name" value="P-loop containing nucleotide triphosphate hydrolases"/>
    <property type="match status" value="1"/>
</dbReference>
<dbReference type="HAMAP" id="MF_00096">
    <property type="entry name" value="MutS"/>
    <property type="match status" value="1"/>
</dbReference>
<dbReference type="InterPro" id="IPR005748">
    <property type="entry name" value="DNA_mismatch_repair_MutS"/>
</dbReference>
<dbReference type="InterPro" id="IPR007695">
    <property type="entry name" value="DNA_mismatch_repair_MutS-lik_N"/>
</dbReference>
<dbReference type="InterPro" id="IPR017261">
    <property type="entry name" value="DNA_mismatch_repair_MutS/MSH"/>
</dbReference>
<dbReference type="InterPro" id="IPR000432">
    <property type="entry name" value="DNA_mismatch_repair_MutS_C"/>
</dbReference>
<dbReference type="InterPro" id="IPR007861">
    <property type="entry name" value="DNA_mismatch_repair_MutS_clamp"/>
</dbReference>
<dbReference type="InterPro" id="IPR007696">
    <property type="entry name" value="DNA_mismatch_repair_MutS_core"/>
</dbReference>
<dbReference type="InterPro" id="IPR016151">
    <property type="entry name" value="DNA_mismatch_repair_MutS_N"/>
</dbReference>
<dbReference type="InterPro" id="IPR036187">
    <property type="entry name" value="DNA_mismatch_repair_MutS_sf"/>
</dbReference>
<dbReference type="InterPro" id="IPR007860">
    <property type="entry name" value="DNA_mmatch_repair_MutS_con_dom"/>
</dbReference>
<dbReference type="InterPro" id="IPR045076">
    <property type="entry name" value="MutS"/>
</dbReference>
<dbReference type="InterPro" id="IPR036678">
    <property type="entry name" value="MutS_con_dom_sf"/>
</dbReference>
<dbReference type="InterPro" id="IPR027417">
    <property type="entry name" value="P-loop_NTPase"/>
</dbReference>
<dbReference type="NCBIfam" id="TIGR01070">
    <property type="entry name" value="mutS1"/>
    <property type="match status" value="1"/>
</dbReference>
<dbReference type="NCBIfam" id="NF003810">
    <property type="entry name" value="PRK05399.1"/>
    <property type="match status" value="1"/>
</dbReference>
<dbReference type="PANTHER" id="PTHR11361:SF34">
    <property type="entry name" value="DNA MISMATCH REPAIR PROTEIN MSH1, MITOCHONDRIAL"/>
    <property type="match status" value="1"/>
</dbReference>
<dbReference type="PANTHER" id="PTHR11361">
    <property type="entry name" value="DNA MISMATCH REPAIR PROTEIN MUTS FAMILY MEMBER"/>
    <property type="match status" value="1"/>
</dbReference>
<dbReference type="Pfam" id="PF01624">
    <property type="entry name" value="MutS_I"/>
    <property type="match status" value="1"/>
</dbReference>
<dbReference type="Pfam" id="PF05188">
    <property type="entry name" value="MutS_II"/>
    <property type="match status" value="1"/>
</dbReference>
<dbReference type="Pfam" id="PF05192">
    <property type="entry name" value="MutS_III"/>
    <property type="match status" value="1"/>
</dbReference>
<dbReference type="Pfam" id="PF05190">
    <property type="entry name" value="MutS_IV"/>
    <property type="match status" value="1"/>
</dbReference>
<dbReference type="Pfam" id="PF00488">
    <property type="entry name" value="MutS_V"/>
    <property type="match status" value="1"/>
</dbReference>
<dbReference type="PIRSF" id="PIRSF037677">
    <property type="entry name" value="DNA_mis_repair_Msh6"/>
    <property type="match status" value="1"/>
</dbReference>
<dbReference type="SMART" id="SM00534">
    <property type="entry name" value="MUTSac"/>
    <property type="match status" value="1"/>
</dbReference>
<dbReference type="SMART" id="SM00533">
    <property type="entry name" value="MUTSd"/>
    <property type="match status" value="1"/>
</dbReference>
<dbReference type="SUPFAM" id="SSF55271">
    <property type="entry name" value="DNA repair protein MutS, domain I"/>
    <property type="match status" value="1"/>
</dbReference>
<dbReference type="SUPFAM" id="SSF53150">
    <property type="entry name" value="DNA repair protein MutS, domain II"/>
    <property type="match status" value="1"/>
</dbReference>
<dbReference type="SUPFAM" id="SSF48334">
    <property type="entry name" value="DNA repair protein MutS, domain III"/>
    <property type="match status" value="1"/>
</dbReference>
<dbReference type="SUPFAM" id="SSF52540">
    <property type="entry name" value="P-loop containing nucleoside triphosphate hydrolases"/>
    <property type="match status" value="1"/>
</dbReference>
<dbReference type="PROSITE" id="PS00486">
    <property type="entry name" value="DNA_MISMATCH_REPAIR_2"/>
    <property type="match status" value="1"/>
</dbReference>
<accession>A0Q0M6</accession>
<keyword id="KW-0067">ATP-binding</keyword>
<keyword id="KW-0227">DNA damage</keyword>
<keyword id="KW-0234">DNA repair</keyword>
<keyword id="KW-0238">DNA-binding</keyword>
<keyword id="KW-0547">Nucleotide-binding</keyword>
<keyword id="KW-1185">Reference proteome</keyword>